<evidence type="ECO:0000255" key="1">
    <source>
        <dbReference type="HAMAP-Rule" id="MF_00087"/>
    </source>
</evidence>
<name>HEM1_ECO5E</name>
<keyword id="KW-0521">NADP</keyword>
<keyword id="KW-0560">Oxidoreductase</keyword>
<keyword id="KW-0627">Porphyrin biosynthesis</keyword>
<accession>B5YXM8</accession>
<gene>
    <name evidence="1" type="primary">hemA</name>
    <name type="ordered locus">ECH74115_1691</name>
</gene>
<dbReference type="EC" id="1.2.1.70" evidence="1"/>
<dbReference type="EMBL" id="CP001164">
    <property type="protein sequence ID" value="ACI39303.1"/>
    <property type="molecule type" value="Genomic_DNA"/>
</dbReference>
<dbReference type="RefSeq" id="WP_001299679.1">
    <property type="nucleotide sequence ID" value="NC_011353.1"/>
</dbReference>
<dbReference type="SMR" id="B5YXM8"/>
<dbReference type="KEGG" id="ecf:ECH74115_1691"/>
<dbReference type="HOGENOM" id="CLU_035113_2_2_6"/>
<dbReference type="UniPathway" id="UPA00251">
    <property type="reaction ID" value="UER00316"/>
</dbReference>
<dbReference type="GO" id="GO:0008883">
    <property type="term" value="F:glutamyl-tRNA reductase activity"/>
    <property type="evidence" value="ECO:0007669"/>
    <property type="project" value="UniProtKB-UniRule"/>
</dbReference>
<dbReference type="GO" id="GO:0050661">
    <property type="term" value="F:NADP binding"/>
    <property type="evidence" value="ECO:0007669"/>
    <property type="project" value="InterPro"/>
</dbReference>
<dbReference type="GO" id="GO:0019353">
    <property type="term" value="P:protoporphyrinogen IX biosynthetic process from glutamate"/>
    <property type="evidence" value="ECO:0007669"/>
    <property type="project" value="TreeGrafter"/>
</dbReference>
<dbReference type="CDD" id="cd05213">
    <property type="entry name" value="NAD_bind_Glutamyl_tRNA_reduct"/>
    <property type="match status" value="1"/>
</dbReference>
<dbReference type="FunFam" id="3.30.460.30:FF:000001">
    <property type="entry name" value="Glutamyl-tRNA reductase"/>
    <property type="match status" value="1"/>
</dbReference>
<dbReference type="FunFam" id="3.40.50.720:FF:000031">
    <property type="entry name" value="Glutamyl-tRNA reductase"/>
    <property type="match status" value="1"/>
</dbReference>
<dbReference type="Gene3D" id="3.30.460.30">
    <property type="entry name" value="Glutamyl-tRNA reductase, N-terminal domain"/>
    <property type="match status" value="1"/>
</dbReference>
<dbReference type="Gene3D" id="3.40.50.720">
    <property type="entry name" value="NAD(P)-binding Rossmann-like Domain"/>
    <property type="match status" value="1"/>
</dbReference>
<dbReference type="HAMAP" id="MF_00087">
    <property type="entry name" value="Glu_tRNA_reductase"/>
    <property type="match status" value="1"/>
</dbReference>
<dbReference type="InterPro" id="IPR000343">
    <property type="entry name" value="4pyrrol_synth_GluRdtase"/>
</dbReference>
<dbReference type="InterPro" id="IPR015896">
    <property type="entry name" value="4pyrrol_synth_GluRdtase_dimer"/>
</dbReference>
<dbReference type="InterPro" id="IPR015895">
    <property type="entry name" value="4pyrrol_synth_GluRdtase_N"/>
</dbReference>
<dbReference type="InterPro" id="IPR018214">
    <property type="entry name" value="GluRdtase_CS"/>
</dbReference>
<dbReference type="InterPro" id="IPR036453">
    <property type="entry name" value="GluRdtase_dimer_dom_sf"/>
</dbReference>
<dbReference type="InterPro" id="IPR036343">
    <property type="entry name" value="GluRdtase_N_sf"/>
</dbReference>
<dbReference type="InterPro" id="IPR036291">
    <property type="entry name" value="NAD(P)-bd_dom_sf"/>
</dbReference>
<dbReference type="InterPro" id="IPR006151">
    <property type="entry name" value="Shikm_DH/Glu-tRNA_Rdtase"/>
</dbReference>
<dbReference type="NCBIfam" id="TIGR01035">
    <property type="entry name" value="hemA"/>
    <property type="match status" value="1"/>
</dbReference>
<dbReference type="PANTHER" id="PTHR43013">
    <property type="entry name" value="GLUTAMYL-TRNA REDUCTASE"/>
    <property type="match status" value="1"/>
</dbReference>
<dbReference type="PANTHER" id="PTHR43013:SF1">
    <property type="entry name" value="GLUTAMYL-TRNA REDUCTASE"/>
    <property type="match status" value="1"/>
</dbReference>
<dbReference type="Pfam" id="PF00745">
    <property type="entry name" value="GlutR_dimer"/>
    <property type="match status" value="1"/>
</dbReference>
<dbReference type="Pfam" id="PF05201">
    <property type="entry name" value="GlutR_N"/>
    <property type="match status" value="1"/>
</dbReference>
<dbReference type="Pfam" id="PF01488">
    <property type="entry name" value="Shikimate_DH"/>
    <property type="match status" value="1"/>
</dbReference>
<dbReference type="PIRSF" id="PIRSF000445">
    <property type="entry name" value="4pyrrol_synth_GluRdtase"/>
    <property type="match status" value="1"/>
</dbReference>
<dbReference type="SUPFAM" id="SSF69742">
    <property type="entry name" value="Glutamyl tRNA-reductase catalytic, N-terminal domain"/>
    <property type="match status" value="1"/>
</dbReference>
<dbReference type="SUPFAM" id="SSF69075">
    <property type="entry name" value="Glutamyl tRNA-reductase dimerization domain"/>
    <property type="match status" value="1"/>
</dbReference>
<dbReference type="SUPFAM" id="SSF51735">
    <property type="entry name" value="NAD(P)-binding Rossmann-fold domains"/>
    <property type="match status" value="1"/>
</dbReference>
<dbReference type="PROSITE" id="PS00747">
    <property type="entry name" value="GLUTR"/>
    <property type="match status" value="1"/>
</dbReference>
<sequence length="418" mass="46307">MTLLALGINHKTAPVSLRERVSFSPDKLDQALDSLLAQPMVQGGVVLSTCNRTELYLSVEEQDNLQEALIRWLCDYHNLNEEDLRKSLYWHQDNDAVSHLMRVASGLDSLVLGEPQILGQVKKAFADSQKGHMKASELERMFQKSFSVAKRVRTETDIGASAVSVAFAACTLARQIFESLSTVTVLLVGAGETIELVARHLREHKVQKMIIANRTRERAQILADEVGAEVIALSDIDERLREADIIISSTASPLPIIGKGMVERALKSRRNQPMLLVDIAVPRDVEPEVGKLANAYLYSVDDLQSIISHNLAQRKAAAVEAETIVAQETSEFMAWLRAQSASETIREYRSQAEQVRDELTAKALAALEQGGDAQAIMQDLAWKLTNRLIHAPTKSLQQAARDGDNERLNILRDSLGLE</sequence>
<protein>
    <recommendedName>
        <fullName evidence="1">Glutamyl-tRNA reductase</fullName>
        <shortName evidence="1">GluTR</shortName>
        <ecNumber evidence="1">1.2.1.70</ecNumber>
    </recommendedName>
</protein>
<comment type="function">
    <text evidence="1">Catalyzes the NADPH-dependent reduction of glutamyl-tRNA(Glu) to glutamate 1-semialdehyde (GSA).</text>
</comment>
<comment type="catalytic activity">
    <reaction evidence="1">
        <text>(S)-4-amino-5-oxopentanoate + tRNA(Glu) + NADP(+) = L-glutamyl-tRNA(Glu) + NADPH + H(+)</text>
        <dbReference type="Rhea" id="RHEA:12344"/>
        <dbReference type="Rhea" id="RHEA-COMP:9663"/>
        <dbReference type="Rhea" id="RHEA-COMP:9680"/>
        <dbReference type="ChEBI" id="CHEBI:15378"/>
        <dbReference type="ChEBI" id="CHEBI:57501"/>
        <dbReference type="ChEBI" id="CHEBI:57783"/>
        <dbReference type="ChEBI" id="CHEBI:58349"/>
        <dbReference type="ChEBI" id="CHEBI:78442"/>
        <dbReference type="ChEBI" id="CHEBI:78520"/>
        <dbReference type="EC" id="1.2.1.70"/>
    </reaction>
</comment>
<comment type="pathway">
    <text evidence="1">Porphyrin-containing compound metabolism; protoporphyrin-IX biosynthesis; 5-aminolevulinate from L-glutamyl-tRNA(Glu): step 1/2.</text>
</comment>
<comment type="subunit">
    <text evidence="1">Homodimer.</text>
</comment>
<comment type="domain">
    <text evidence="1">Possesses an unusual extended V-shaped dimeric structure with each monomer consisting of three distinct domains arranged along a curved 'spinal' alpha-helix. The N-terminal catalytic domain specifically recognizes the glutamate moiety of the substrate. The second domain is the NADPH-binding domain, and the third C-terminal domain is responsible for dimerization.</text>
</comment>
<comment type="miscellaneous">
    <text evidence="1">During catalysis, the active site Cys acts as a nucleophile attacking the alpha-carbonyl group of tRNA-bound glutamate with the formation of a thioester intermediate between enzyme and glutamate, and the concomitant release of tRNA(Glu). The thioester intermediate is finally reduced by direct hydride transfer from NADPH, to form the product GSA.</text>
</comment>
<comment type="similarity">
    <text evidence="1">Belongs to the glutamyl-tRNA reductase family.</text>
</comment>
<proteinExistence type="inferred from homology"/>
<reference key="1">
    <citation type="journal article" date="2011" name="Proc. Natl. Acad. Sci. U.S.A.">
        <title>Genomic anatomy of Escherichia coli O157:H7 outbreaks.</title>
        <authorList>
            <person name="Eppinger M."/>
            <person name="Mammel M.K."/>
            <person name="Leclerc J.E."/>
            <person name="Ravel J."/>
            <person name="Cebula T.A."/>
        </authorList>
    </citation>
    <scope>NUCLEOTIDE SEQUENCE [LARGE SCALE GENOMIC DNA]</scope>
    <source>
        <strain>EC4115 / EHEC</strain>
    </source>
</reference>
<feature type="chain" id="PRO_1000093132" description="Glutamyl-tRNA reductase">
    <location>
        <begin position="1"/>
        <end position="418"/>
    </location>
</feature>
<feature type="active site" description="Nucleophile" evidence="1">
    <location>
        <position position="50"/>
    </location>
</feature>
<feature type="binding site" evidence="1">
    <location>
        <begin position="49"/>
        <end position="52"/>
    </location>
    <ligand>
        <name>substrate</name>
    </ligand>
</feature>
<feature type="binding site" evidence="1">
    <location>
        <position position="109"/>
    </location>
    <ligand>
        <name>substrate</name>
    </ligand>
</feature>
<feature type="binding site" evidence="1">
    <location>
        <begin position="114"/>
        <end position="116"/>
    </location>
    <ligand>
        <name>substrate</name>
    </ligand>
</feature>
<feature type="binding site" evidence="1">
    <location>
        <position position="120"/>
    </location>
    <ligand>
        <name>substrate</name>
    </ligand>
</feature>
<feature type="binding site" evidence="1">
    <location>
        <begin position="189"/>
        <end position="194"/>
    </location>
    <ligand>
        <name>NADP(+)</name>
        <dbReference type="ChEBI" id="CHEBI:58349"/>
    </ligand>
</feature>
<feature type="site" description="Important for activity" evidence="1">
    <location>
        <position position="99"/>
    </location>
</feature>
<organism>
    <name type="scientific">Escherichia coli O157:H7 (strain EC4115 / EHEC)</name>
    <dbReference type="NCBI Taxonomy" id="444450"/>
    <lineage>
        <taxon>Bacteria</taxon>
        <taxon>Pseudomonadati</taxon>
        <taxon>Pseudomonadota</taxon>
        <taxon>Gammaproteobacteria</taxon>
        <taxon>Enterobacterales</taxon>
        <taxon>Enterobacteriaceae</taxon>
        <taxon>Escherichia</taxon>
    </lineage>
</organism>